<dbReference type="EC" id="3.5.1.23" evidence="1"/>
<dbReference type="EMBL" id="Z48582">
    <property type="protein sequence ID" value="CAA88464.1"/>
    <property type="molecule type" value="Genomic_DNA"/>
</dbReference>
<dbReference type="PIR" id="T21456">
    <property type="entry name" value="T21456"/>
</dbReference>
<dbReference type="RefSeq" id="NP_496187.1">
    <property type="nucleotide sequence ID" value="NM_063786.4"/>
</dbReference>
<dbReference type="SMR" id="Q09551"/>
<dbReference type="BioGRID" id="49800">
    <property type="interactions" value="1"/>
</dbReference>
<dbReference type="FunCoup" id="Q09551">
    <property type="interactions" value="130"/>
</dbReference>
<dbReference type="IntAct" id="Q09551">
    <property type="interactions" value="1"/>
</dbReference>
<dbReference type="MINT" id="Q09551"/>
<dbReference type="STRING" id="6239.F27E5.1.1"/>
<dbReference type="MEROPS" id="C89.A01"/>
<dbReference type="GlyCosmos" id="Q09551">
    <property type="glycosylation" value="3 sites, No reported glycans"/>
</dbReference>
<dbReference type="PaxDb" id="6239-F27E5.1"/>
<dbReference type="PeptideAtlas" id="Q09551"/>
<dbReference type="EnsemblMetazoa" id="F27E5.1.1">
    <property type="protein sequence ID" value="F27E5.1.1"/>
    <property type="gene ID" value="WBGene00009192"/>
</dbReference>
<dbReference type="GeneID" id="185021"/>
<dbReference type="KEGG" id="cel:CELE_F27E5.1"/>
<dbReference type="UCSC" id="F27E5.1">
    <property type="organism name" value="c. elegans"/>
</dbReference>
<dbReference type="AGR" id="WB:WBGene00009192"/>
<dbReference type="CTD" id="185021"/>
<dbReference type="WormBase" id="F27E5.1">
    <property type="protein sequence ID" value="CE01562"/>
    <property type="gene ID" value="WBGene00009192"/>
    <property type="gene designation" value="asah-2"/>
</dbReference>
<dbReference type="eggNOG" id="ENOG502QVBG">
    <property type="taxonomic scope" value="Eukaryota"/>
</dbReference>
<dbReference type="GeneTree" id="ENSGT00530000063548"/>
<dbReference type="HOGENOM" id="CLU_054401_0_0_1"/>
<dbReference type="InParanoid" id="Q09551"/>
<dbReference type="OMA" id="FQCAREK"/>
<dbReference type="OrthoDB" id="5273684at2759"/>
<dbReference type="PhylomeDB" id="Q09551"/>
<dbReference type="PRO" id="PR:Q09551"/>
<dbReference type="Proteomes" id="UP000001940">
    <property type="component" value="Chromosome II"/>
</dbReference>
<dbReference type="Bgee" id="WBGene00009192">
    <property type="expression patterns" value="Expressed in larva and 2 other cell types or tissues"/>
</dbReference>
<dbReference type="GO" id="GO:0005764">
    <property type="term" value="C:lysosome"/>
    <property type="evidence" value="ECO:0007669"/>
    <property type="project" value="InterPro"/>
</dbReference>
<dbReference type="GO" id="GO:0016020">
    <property type="term" value="C:membrane"/>
    <property type="evidence" value="ECO:0007669"/>
    <property type="project" value="GOC"/>
</dbReference>
<dbReference type="GO" id="GO:0017064">
    <property type="term" value="F:fatty acid amide hydrolase activity"/>
    <property type="evidence" value="ECO:0007669"/>
    <property type="project" value="InterPro"/>
</dbReference>
<dbReference type="GO" id="GO:0017040">
    <property type="term" value="F:N-acylsphingosine amidohydrolase activity"/>
    <property type="evidence" value="ECO:0000318"/>
    <property type="project" value="GO_Central"/>
</dbReference>
<dbReference type="GO" id="GO:0006631">
    <property type="term" value="P:fatty acid metabolic process"/>
    <property type="evidence" value="ECO:0007669"/>
    <property type="project" value="InterPro"/>
</dbReference>
<dbReference type="GO" id="GO:0006665">
    <property type="term" value="P:sphingolipid metabolic process"/>
    <property type="evidence" value="ECO:0007669"/>
    <property type="project" value="UniProtKB-KW"/>
</dbReference>
<dbReference type="CDD" id="cd01903">
    <property type="entry name" value="Ntn_AC_NAAA"/>
    <property type="match status" value="1"/>
</dbReference>
<dbReference type="InterPro" id="IPR016699">
    <property type="entry name" value="Acid_ceramidase-like"/>
</dbReference>
<dbReference type="InterPro" id="IPR029130">
    <property type="entry name" value="Acid_ceramidase_N"/>
</dbReference>
<dbReference type="InterPro" id="IPR029132">
    <property type="entry name" value="CBAH/NAAA_C"/>
</dbReference>
<dbReference type="PANTHER" id="PTHR28583">
    <property type="entry name" value="ACID AMIDASE"/>
    <property type="match status" value="1"/>
</dbReference>
<dbReference type="PANTHER" id="PTHR28583:SF3">
    <property type="entry name" value="ACID CERAMIDASE-RELATED"/>
    <property type="match status" value="1"/>
</dbReference>
<dbReference type="Pfam" id="PF02275">
    <property type="entry name" value="CBAH"/>
    <property type="match status" value="1"/>
</dbReference>
<dbReference type="Pfam" id="PF15508">
    <property type="entry name" value="NAAA-beta"/>
    <property type="match status" value="1"/>
</dbReference>
<dbReference type="PIRSF" id="PIRSF017632">
    <property type="entry name" value="Acid_ceramidase-like"/>
    <property type="match status" value="1"/>
</dbReference>
<keyword id="KW-0325">Glycoprotein</keyword>
<keyword id="KW-0378">Hydrolase</keyword>
<keyword id="KW-0443">Lipid metabolism</keyword>
<keyword id="KW-1185">Reference proteome</keyword>
<keyword id="KW-0732">Signal</keyword>
<keyword id="KW-0746">Sphingolipid metabolism</keyword>
<organism>
    <name type="scientific">Caenorhabditis elegans</name>
    <dbReference type="NCBI Taxonomy" id="6239"/>
    <lineage>
        <taxon>Eukaryota</taxon>
        <taxon>Metazoa</taxon>
        <taxon>Ecdysozoa</taxon>
        <taxon>Nematoda</taxon>
        <taxon>Chromadorea</taxon>
        <taxon>Rhabditida</taxon>
        <taxon>Rhabditina</taxon>
        <taxon>Rhabditomorpha</taxon>
        <taxon>Rhabditoidea</taxon>
        <taxon>Rhabditidae</taxon>
        <taxon>Peloderinae</taxon>
        <taxon>Caenorhabditis</taxon>
    </lineage>
</organism>
<protein>
    <recommendedName>
        <fullName evidence="5">Probable acid ceramidase</fullName>
        <shortName evidence="1">AC</shortName>
        <shortName evidence="1">ACDase</shortName>
        <shortName evidence="1">Acid CDase</shortName>
        <ecNumber evidence="1">3.5.1.23</ecNumber>
    </recommendedName>
    <alternativeName>
        <fullName evidence="1">Acylsphingosine deacylase</fullName>
    </alternativeName>
    <alternativeName>
        <fullName evidence="6">N-acylsphingosine amidohydrolase</fullName>
    </alternativeName>
</protein>
<gene>
    <name evidence="6" type="primary">asah-2</name>
    <name evidence="6" type="ORF">F27E5.1</name>
</gene>
<accession>Q09551</accession>
<evidence type="ECO:0000250" key="1">
    <source>
        <dbReference type="UniProtKB" id="Q13510"/>
    </source>
</evidence>
<evidence type="ECO:0000255" key="2"/>
<evidence type="ECO:0000255" key="3">
    <source>
        <dbReference type="PROSITE-ProRule" id="PRU00498"/>
    </source>
</evidence>
<evidence type="ECO:0000269" key="4">
    <source>
    </source>
</evidence>
<evidence type="ECO:0000305" key="5"/>
<evidence type="ECO:0000312" key="6">
    <source>
        <dbReference type="WormBase" id="F27E5.1"/>
    </source>
</evidence>
<name>ASAH2_CAEEL</name>
<comment type="function">
    <text evidence="1 4">Catalyzes the hydrolysis of ceramides into sphingoid base and free fatty acid (By similarity). C.elegans contain specific sphingoid bases, which are unique or different in structure compared to the sphingoid bases found in other animals. Two examples of these distinctive compounds are: 15-methylhexadecasphinganine and 15-methylhexadecasphing-4-enine (PubMed:30155209).</text>
</comment>
<comment type="catalytic activity">
    <reaction evidence="5">
        <text>an N-acyl-sphingoid base + H2O = a sphingoid base + a fatty acid</text>
        <dbReference type="Rhea" id="RHEA:78455"/>
        <dbReference type="ChEBI" id="CHEBI:15377"/>
        <dbReference type="ChEBI" id="CHEBI:28868"/>
        <dbReference type="ChEBI" id="CHEBI:83273"/>
        <dbReference type="ChEBI" id="CHEBI:84410"/>
    </reaction>
    <physiologicalReaction direction="left-to-right" evidence="5">
        <dbReference type="Rhea" id="RHEA:78456"/>
    </physiologicalReaction>
</comment>
<comment type="catalytic activity">
    <reaction evidence="1">
        <text>an N-acylsphing-4-enine + H2O = sphing-4-enine + a fatty acid</text>
        <dbReference type="Rhea" id="RHEA:20856"/>
        <dbReference type="ChEBI" id="CHEBI:15377"/>
        <dbReference type="ChEBI" id="CHEBI:28868"/>
        <dbReference type="ChEBI" id="CHEBI:52639"/>
        <dbReference type="ChEBI" id="CHEBI:57756"/>
        <dbReference type="EC" id="3.5.1.23"/>
    </reaction>
    <physiologicalReaction direction="left-to-right" evidence="1">
        <dbReference type="Rhea" id="RHEA:20857"/>
    </physiologicalReaction>
</comment>
<comment type="catalytic activity">
    <reaction evidence="5">
        <text>an N-acyl-15-methylhexadecasphing-4-enine + H2O = 15-methylhexadecasphing-4-enine + a fatty acid</text>
        <dbReference type="Rhea" id="RHEA:34711"/>
        <dbReference type="ChEBI" id="CHEBI:15377"/>
        <dbReference type="ChEBI" id="CHEBI:28868"/>
        <dbReference type="ChEBI" id="CHEBI:70771"/>
        <dbReference type="ChEBI" id="CHEBI:70846"/>
    </reaction>
    <physiologicalReaction direction="left-to-right" evidence="5">
        <dbReference type="Rhea" id="RHEA:34712"/>
    </physiologicalReaction>
</comment>
<comment type="similarity">
    <text evidence="5">Belongs to the acid ceramidase family.</text>
</comment>
<sequence length="401" mass="45235">MKPVAISLSLLLLVTLLPGSEQRKVDNPDFQPNCLVGGPDIYDPAQSEKVLWFDVNLDLPPRQRFQQIAKAYKKEIHAVFDVLNYFLTIIPGVNAWELIGNMTASALDKGMIMNPYRDEVLGIAEVLDVPLGNLVFLNLFYEMSRFCTSIVAQTEDNKDLYHARNLDFGQLFVWDIAAQSWGLTEALKKVSVNINFFKNGKLLFKGSTLAGHVGVLTAMKPHKFSLSMNAKVQPDIINVAKWYMGAYENTDLQFVMYFDRWLFENCDDFQCAREKIAGVKLLTGAYFILGGANPGEGSVLVRNTTSVQFERKLFDGANDWFLLQTNYDPDKDPLFIDNRRDPGNACMNKLTRANVGMKGIFTVLSSKPNLNKTTVHTVIMSVTKGYFETFIQKCPNPCWAF</sequence>
<proteinExistence type="inferred from homology"/>
<reference key="1">
    <citation type="journal article" date="1998" name="Science">
        <title>Genome sequence of the nematode C. elegans: a platform for investigating biology.</title>
        <authorList>
            <consortium name="The C. elegans sequencing consortium"/>
        </authorList>
    </citation>
    <scope>NUCLEOTIDE SEQUENCE [LARGE SCALE GENOMIC DNA]</scope>
    <source>
        <strain>Bristol N2</strain>
    </source>
</reference>
<reference key="2">
    <citation type="journal article" date="2017" name="Chem. Sci.">
        <title>Structure and conserved function of iso-branched sphingoid bases from the nematode Caenorhabditis elegans.</title>
        <authorList>
            <person name="Hannich J.T."/>
            <person name="Mellal D."/>
            <person name="Feng S."/>
            <person name="Zumbuehl A."/>
            <person name="Riezman H."/>
        </authorList>
    </citation>
    <scope>FUNCTION</scope>
</reference>
<feature type="signal peptide" evidence="2">
    <location>
        <begin position="1"/>
        <end position="22"/>
    </location>
</feature>
<feature type="chain" id="PRO_0000002321" description="Probable acid ceramidase" evidence="5">
    <location>
        <begin position="23"/>
        <end position="401"/>
    </location>
</feature>
<feature type="glycosylation site" description="N-linked (GlcNAc...) asparagine" evidence="3">
    <location>
        <position position="101"/>
    </location>
</feature>
<feature type="glycosylation site" description="N-linked (GlcNAc...) asparagine" evidence="3">
    <location>
        <position position="303"/>
    </location>
</feature>
<feature type="glycosylation site" description="N-linked (GlcNAc...) asparagine" evidence="3">
    <location>
        <position position="371"/>
    </location>
</feature>